<comment type="catalytic activity">
    <reaction evidence="1">
        <text>L-histidine + H(+) = histamine + CO2</text>
        <dbReference type="Rhea" id="RHEA:20840"/>
        <dbReference type="ChEBI" id="CHEBI:15378"/>
        <dbReference type="ChEBI" id="CHEBI:16526"/>
        <dbReference type="ChEBI" id="CHEBI:57595"/>
        <dbReference type="ChEBI" id="CHEBI:58432"/>
        <dbReference type="EC" id="4.1.1.22"/>
    </reaction>
</comment>
<comment type="cofactor">
    <cofactor evidence="1">
        <name>pyridoxal 5'-phosphate</name>
        <dbReference type="ChEBI" id="CHEBI:597326"/>
    </cofactor>
</comment>
<comment type="subunit">
    <text evidence="1">Homotetramer.</text>
</comment>
<comment type="similarity">
    <text evidence="1">Belongs to the group II decarboxylase family.</text>
</comment>
<accession>B2HVG6</accession>
<dbReference type="EC" id="4.1.1.22" evidence="1"/>
<dbReference type="EMBL" id="CP000863">
    <property type="protein sequence ID" value="ACC57888.1"/>
    <property type="molecule type" value="Genomic_DNA"/>
</dbReference>
<dbReference type="SMR" id="B2HVG6"/>
<dbReference type="KEGG" id="abc:ACICU_02576"/>
<dbReference type="HOGENOM" id="CLU_028929_0_2_6"/>
<dbReference type="Proteomes" id="UP000008839">
    <property type="component" value="Chromosome"/>
</dbReference>
<dbReference type="GO" id="GO:0004398">
    <property type="term" value="F:histidine decarboxylase activity"/>
    <property type="evidence" value="ECO:0007669"/>
    <property type="project" value="UniProtKB-UniRule"/>
</dbReference>
<dbReference type="GO" id="GO:0030170">
    <property type="term" value="F:pyridoxal phosphate binding"/>
    <property type="evidence" value="ECO:0007669"/>
    <property type="project" value="InterPro"/>
</dbReference>
<dbReference type="GO" id="GO:0019752">
    <property type="term" value="P:carboxylic acid metabolic process"/>
    <property type="evidence" value="ECO:0007669"/>
    <property type="project" value="InterPro"/>
</dbReference>
<dbReference type="Gene3D" id="3.40.640.10">
    <property type="entry name" value="Type I PLP-dependent aspartate aminotransferase-like (Major domain)"/>
    <property type="match status" value="1"/>
</dbReference>
<dbReference type="HAMAP" id="MF_00609">
    <property type="entry name" value="Pyridoxal_decarbox"/>
    <property type="match status" value="1"/>
</dbReference>
<dbReference type="InterPro" id="IPR051151">
    <property type="entry name" value="Group_II_Decarboxylase"/>
</dbReference>
<dbReference type="InterPro" id="IPR023523">
    <property type="entry name" value="Hist_deCOase_bac"/>
</dbReference>
<dbReference type="InterPro" id="IPR002129">
    <property type="entry name" value="PyrdxlP-dep_de-COase"/>
</dbReference>
<dbReference type="InterPro" id="IPR015424">
    <property type="entry name" value="PyrdxlP-dep_Trfase"/>
</dbReference>
<dbReference type="InterPro" id="IPR015421">
    <property type="entry name" value="PyrdxlP-dep_Trfase_major"/>
</dbReference>
<dbReference type="InterPro" id="IPR021115">
    <property type="entry name" value="Pyridoxal-P_BS"/>
</dbReference>
<dbReference type="NCBIfam" id="NF002748">
    <property type="entry name" value="PRK02769.1"/>
    <property type="match status" value="1"/>
</dbReference>
<dbReference type="PANTHER" id="PTHR46101">
    <property type="match status" value="1"/>
</dbReference>
<dbReference type="PANTHER" id="PTHR46101:SF2">
    <property type="entry name" value="SERINE DECARBOXYLASE"/>
    <property type="match status" value="1"/>
</dbReference>
<dbReference type="Pfam" id="PF00282">
    <property type="entry name" value="Pyridoxal_deC"/>
    <property type="match status" value="1"/>
</dbReference>
<dbReference type="SUPFAM" id="SSF53383">
    <property type="entry name" value="PLP-dependent transferases"/>
    <property type="match status" value="1"/>
</dbReference>
<dbReference type="PROSITE" id="PS00392">
    <property type="entry name" value="DDC_GAD_HDC_YDC"/>
    <property type="match status" value="1"/>
</dbReference>
<evidence type="ECO:0000255" key="1">
    <source>
        <dbReference type="HAMAP-Rule" id="MF_00609"/>
    </source>
</evidence>
<gene>
    <name evidence="1" type="primary">hdc</name>
    <name type="ordered locus">ACICU_02576</name>
</gene>
<protein>
    <recommendedName>
        <fullName evidence="1">Histidine decarboxylase</fullName>
        <shortName evidence="1">HDC</shortName>
        <ecNumber evidence="1">4.1.1.22</ecNumber>
    </recommendedName>
</protein>
<reference key="1">
    <citation type="journal article" date="2008" name="Antimicrob. Agents Chemother.">
        <title>Whole-genome pyrosequencing of an epidemic multidrug-resistant Acinetobacter baumannii strain belonging to the European clone II group.</title>
        <authorList>
            <person name="Iacono M."/>
            <person name="Villa L."/>
            <person name="Fortini D."/>
            <person name="Bordoni R."/>
            <person name="Imperi F."/>
            <person name="Bonnal R.J."/>
            <person name="Sicheritz-Ponten T."/>
            <person name="De Bellis G."/>
            <person name="Visca P."/>
            <person name="Cassone A."/>
            <person name="Carattoli A."/>
        </authorList>
    </citation>
    <scope>NUCLEOTIDE SEQUENCE [LARGE SCALE GENOMIC DNA]</scope>
    <source>
        <strain>ACICU</strain>
    </source>
</reference>
<name>DCHS_ACIBC</name>
<proteinExistence type="inferred from homology"/>
<keyword id="KW-0210">Decarboxylase</keyword>
<keyword id="KW-0456">Lyase</keyword>
<keyword id="KW-0663">Pyridoxal phosphate</keyword>
<sequence>MILSPADQERIETFWNYCLKHQYFNIGYPESADFDYSALFRFFKFSINNCGDWKDYSNYALNSFDFEKDVMAYFAEIFQIPFEESWGYVTNGGTEGNMFGCYLARELFPDSTLYYSKDTHYSVRKIAKLLQMKSCVIESLDNGEIDYDDLIHKIKTNKESHPIIFANIGTTMTGAIDDIEMIQERLAQIGIMRRDYYIHADAALSGMILPFVDHPQAFSFAHGIDSICVSGHKMIGSPIPCGIVVAKRQNVERISVDVDYISTRDQTISGSRNGHTVLLMWAAIRSQTNLQRRQRIQHCLKMAQYAVDRFQAVGIPAWRNPNSITVVFPCPSEHIWKKHYLATSGNMAHLITTAHHRDTRQIDSLIDDVIFDLQGASKRTVGF</sequence>
<feature type="chain" id="PRO_1000130346" description="Histidine decarboxylase">
    <location>
        <begin position="1"/>
        <end position="383"/>
    </location>
</feature>
<feature type="binding site" evidence="1">
    <location>
        <position position="120"/>
    </location>
    <ligand>
        <name>substrate</name>
    </ligand>
</feature>
<feature type="modified residue" description="N6-(pyridoxal phosphate)lysine" evidence="1">
    <location>
        <position position="233"/>
    </location>
</feature>
<organism>
    <name type="scientific">Acinetobacter baumannii (strain ACICU)</name>
    <dbReference type="NCBI Taxonomy" id="405416"/>
    <lineage>
        <taxon>Bacteria</taxon>
        <taxon>Pseudomonadati</taxon>
        <taxon>Pseudomonadota</taxon>
        <taxon>Gammaproteobacteria</taxon>
        <taxon>Moraxellales</taxon>
        <taxon>Moraxellaceae</taxon>
        <taxon>Acinetobacter</taxon>
        <taxon>Acinetobacter calcoaceticus/baumannii complex</taxon>
    </lineage>
</organism>